<reference key="1">
    <citation type="journal article" date="2011" name="J. Bacteriol.">
        <title>Complete genome sequence of the Thermophilic Bacterium Exiguobacterium sp. AT1b.</title>
        <authorList>
            <person name="Vishnivetskaya T.A."/>
            <person name="Lucas S."/>
            <person name="Copeland A."/>
            <person name="Lapidus A."/>
            <person name="Glavina del Rio T."/>
            <person name="Dalin E."/>
            <person name="Tice H."/>
            <person name="Bruce D.C."/>
            <person name="Goodwin L.A."/>
            <person name="Pitluck S."/>
            <person name="Saunders E."/>
            <person name="Brettin T."/>
            <person name="Detter C."/>
            <person name="Han C."/>
            <person name="Larimer F."/>
            <person name="Land M.L."/>
            <person name="Hauser L.J."/>
            <person name="Kyrpides N.C."/>
            <person name="Ovchinnikova G."/>
            <person name="Kathariou S."/>
            <person name="Ramaley R.F."/>
            <person name="Rodrigues D.F."/>
            <person name="Hendrix C."/>
            <person name="Richardson P."/>
            <person name="Tiedje J.M."/>
        </authorList>
    </citation>
    <scope>NUCLEOTIDE SEQUENCE [LARGE SCALE GENOMIC DNA]</scope>
    <source>
        <strain>ATCC BAA-1283 / AT1b</strain>
    </source>
</reference>
<evidence type="ECO:0000255" key="1">
    <source>
        <dbReference type="HAMAP-Rule" id="MF_01103"/>
    </source>
</evidence>
<evidence type="ECO:0000256" key="2">
    <source>
        <dbReference type="SAM" id="MobiDB-lite"/>
    </source>
</evidence>
<feature type="chain" id="PRO_1000213550" description="UPF0291 protein EAT1b_0405">
    <location>
        <begin position="1"/>
        <end position="77"/>
    </location>
</feature>
<feature type="region of interest" description="Disordered" evidence="2">
    <location>
        <begin position="53"/>
        <end position="77"/>
    </location>
</feature>
<feature type="compositionally biased region" description="Basic and acidic residues" evidence="2">
    <location>
        <begin position="63"/>
        <end position="77"/>
    </location>
</feature>
<gene>
    <name type="ordered locus">EAT1b_0405</name>
</gene>
<organism>
    <name type="scientific">Exiguobacterium sp. (strain ATCC BAA-1283 / AT1b)</name>
    <dbReference type="NCBI Taxonomy" id="360911"/>
    <lineage>
        <taxon>Bacteria</taxon>
        <taxon>Bacillati</taxon>
        <taxon>Bacillota</taxon>
        <taxon>Bacilli</taxon>
        <taxon>Bacillales</taxon>
        <taxon>Bacillales Family XII. Incertae Sedis</taxon>
        <taxon>Exiguobacterium</taxon>
    </lineage>
</organism>
<protein>
    <recommendedName>
        <fullName evidence="1">UPF0291 protein EAT1b_0405</fullName>
    </recommendedName>
</protein>
<accession>C4L2S9</accession>
<dbReference type="EMBL" id="CP001615">
    <property type="protein sequence ID" value="ACQ69337.1"/>
    <property type="molecule type" value="Genomic_DNA"/>
</dbReference>
<dbReference type="RefSeq" id="WP_012726456.1">
    <property type="nucleotide sequence ID" value="NC_012673.1"/>
</dbReference>
<dbReference type="SMR" id="C4L2S9"/>
<dbReference type="STRING" id="360911.EAT1b_0405"/>
<dbReference type="KEGG" id="eat:EAT1b_0405"/>
<dbReference type="eggNOG" id="COG4224">
    <property type="taxonomic scope" value="Bacteria"/>
</dbReference>
<dbReference type="HOGENOM" id="CLU_173137_0_2_9"/>
<dbReference type="OrthoDB" id="390105at2"/>
<dbReference type="Proteomes" id="UP000000716">
    <property type="component" value="Chromosome"/>
</dbReference>
<dbReference type="GO" id="GO:0005737">
    <property type="term" value="C:cytoplasm"/>
    <property type="evidence" value="ECO:0007669"/>
    <property type="project" value="UniProtKB-SubCell"/>
</dbReference>
<dbReference type="Gene3D" id="1.10.287.540">
    <property type="entry name" value="Helix hairpin bin"/>
    <property type="match status" value="1"/>
</dbReference>
<dbReference type="HAMAP" id="MF_01103">
    <property type="entry name" value="UPF0291"/>
    <property type="match status" value="1"/>
</dbReference>
<dbReference type="InterPro" id="IPR009242">
    <property type="entry name" value="DUF896"/>
</dbReference>
<dbReference type="PANTHER" id="PTHR37300">
    <property type="entry name" value="UPF0291 PROTEIN CBO2609/CLC_2481"/>
    <property type="match status" value="1"/>
</dbReference>
<dbReference type="PANTHER" id="PTHR37300:SF1">
    <property type="entry name" value="UPF0291 PROTEIN YNZC"/>
    <property type="match status" value="1"/>
</dbReference>
<dbReference type="Pfam" id="PF05979">
    <property type="entry name" value="DUF896"/>
    <property type="match status" value="1"/>
</dbReference>
<dbReference type="SUPFAM" id="SSF158221">
    <property type="entry name" value="YnzC-like"/>
    <property type="match status" value="1"/>
</dbReference>
<sequence>MLAPGQLERINFLANKAKTEGLSQDEMNEQQNLRQEYLKAFRQSFKSQMMGMKVVDPDGNDVTPEKLKEDQKRYRGE</sequence>
<proteinExistence type="inferred from homology"/>
<comment type="subcellular location">
    <subcellularLocation>
        <location evidence="1">Cytoplasm</location>
    </subcellularLocation>
</comment>
<comment type="similarity">
    <text evidence="1">Belongs to the UPF0291 family.</text>
</comment>
<name>Y405_EXISA</name>
<keyword id="KW-0963">Cytoplasm</keyword>